<comment type="function">
    <text evidence="1">Forms part of the ribosomal stalk which helps the ribosome interact with GTP-bound translation factors. Is thus essential for accurate translation.</text>
</comment>
<comment type="subunit">
    <text evidence="1">Homodimer. Part of the ribosomal stalk of the 50S ribosomal subunit. Forms a multimeric L10(L12)X complex, where L10 forms an elongated spine to which 2 to 4 L12 dimers bind in a sequential fashion. Binds GTP-bound translation factors.</text>
</comment>
<comment type="similarity">
    <text evidence="1">Belongs to the bacterial ribosomal protein bL12 family.</text>
</comment>
<proteinExistence type="inferred from homology"/>
<sequence>MAEITKADVVSFIENMTVLELSELVKELEEKFGVSAAAPVAVAAAAAPAAAAEAAEEKTEFDIILKSAGANKIGVIKVVRALTGLGLKEAKDLVDGAPKSVKTGVSKEEAEDAKKQLVESGAEVEIK</sequence>
<dbReference type="EMBL" id="CP000148">
    <property type="protein sequence ID" value="ABB30860.1"/>
    <property type="molecule type" value="Genomic_DNA"/>
</dbReference>
<dbReference type="RefSeq" id="WP_004514634.1">
    <property type="nucleotide sequence ID" value="NC_007517.1"/>
</dbReference>
<dbReference type="SMR" id="Q39Y14"/>
<dbReference type="STRING" id="269799.Gmet_0618"/>
<dbReference type="KEGG" id="gme:Gmet_0618"/>
<dbReference type="eggNOG" id="COG0222">
    <property type="taxonomic scope" value="Bacteria"/>
</dbReference>
<dbReference type="HOGENOM" id="CLU_086499_3_0_7"/>
<dbReference type="Proteomes" id="UP000007073">
    <property type="component" value="Chromosome"/>
</dbReference>
<dbReference type="GO" id="GO:0022625">
    <property type="term" value="C:cytosolic large ribosomal subunit"/>
    <property type="evidence" value="ECO:0007669"/>
    <property type="project" value="TreeGrafter"/>
</dbReference>
<dbReference type="GO" id="GO:0003729">
    <property type="term" value="F:mRNA binding"/>
    <property type="evidence" value="ECO:0007669"/>
    <property type="project" value="TreeGrafter"/>
</dbReference>
<dbReference type="GO" id="GO:0003735">
    <property type="term" value="F:structural constituent of ribosome"/>
    <property type="evidence" value="ECO:0007669"/>
    <property type="project" value="InterPro"/>
</dbReference>
<dbReference type="GO" id="GO:0006412">
    <property type="term" value="P:translation"/>
    <property type="evidence" value="ECO:0007669"/>
    <property type="project" value="UniProtKB-UniRule"/>
</dbReference>
<dbReference type="CDD" id="cd00387">
    <property type="entry name" value="Ribosomal_L7_L12"/>
    <property type="match status" value="1"/>
</dbReference>
<dbReference type="FunFam" id="1.20.5.710:FF:000005">
    <property type="entry name" value="50S ribosomal protein L7/L12"/>
    <property type="match status" value="1"/>
</dbReference>
<dbReference type="FunFam" id="3.30.1390.10:FF:000001">
    <property type="entry name" value="50S ribosomal protein L7/L12"/>
    <property type="match status" value="1"/>
</dbReference>
<dbReference type="Gene3D" id="3.30.1390.10">
    <property type="match status" value="1"/>
</dbReference>
<dbReference type="Gene3D" id="1.20.5.710">
    <property type="entry name" value="Single helix bin"/>
    <property type="match status" value="1"/>
</dbReference>
<dbReference type="HAMAP" id="MF_00368">
    <property type="entry name" value="Ribosomal_bL12"/>
    <property type="match status" value="1"/>
</dbReference>
<dbReference type="InterPro" id="IPR000206">
    <property type="entry name" value="Ribosomal_bL12"/>
</dbReference>
<dbReference type="InterPro" id="IPR013823">
    <property type="entry name" value="Ribosomal_bL12_C"/>
</dbReference>
<dbReference type="InterPro" id="IPR014719">
    <property type="entry name" value="Ribosomal_bL12_C/ClpS-like"/>
</dbReference>
<dbReference type="InterPro" id="IPR008932">
    <property type="entry name" value="Ribosomal_bL12_oligo"/>
</dbReference>
<dbReference type="InterPro" id="IPR036235">
    <property type="entry name" value="Ribosomal_bL12_oligo_N_sf"/>
</dbReference>
<dbReference type="NCBIfam" id="TIGR00855">
    <property type="entry name" value="L12"/>
    <property type="match status" value="1"/>
</dbReference>
<dbReference type="PANTHER" id="PTHR45987">
    <property type="entry name" value="39S RIBOSOMAL PROTEIN L12"/>
    <property type="match status" value="1"/>
</dbReference>
<dbReference type="PANTHER" id="PTHR45987:SF4">
    <property type="entry name" value="LARGE RIBOSOMAL SUBUNIT PROTEIN BL12M"/>
    <property type="match status" value="1"/>
</dbReference>
<dbReference type="Pfam" id="PF00542">
    <property type="entry name" value="Ribosomal_L12"/>
    <property type="match status" value="1"/>
</dbReference>
<dbReference type="Pfam" id="PF16320">
    <property type="entry name" value="Ribosomal_L12_N"/>
    <property type="match status" value="1"/>
</dbReference>
<dbReference type="SUPFAM" id="SSF54736">
    <property type="entry name" value="ClpS-like"/>
    <property type="match status" value="1"/>
</dbReference>
<dbReference type="SUPFAM" id="SSF48300">
    <property type="entry name" value="Ribosomal protein L7/12, oligomerisation (N-terminal) domain"/>
    <property type="match status" value="1"/>
</dbReference>
<gene>
    <name evidence="1" type="primary">rplL</name>
    <name type="ordered locus">Gmet_0618</name>
</gene>
<organism>
    <name type="scientific">Geobacter metallireducens (strain ATCC 53774 / DSM 7210 / GS-15)</name>
    <dbReference type="NCBI Taxonomy" id="269799"/>
    <lineage>
        <taxon>Bacteria</taxon>
        <taxon>Pseudomonadati</taxon>
        <taxon>Thermodesulfobacteriota</taxon>
        <taxon>Desulfuromonadia</taxon>
        <taxon>Geobacterales</taxon>
        <taxon>Geobacteraceae</taxon>
        <taxon>Geobacter</taxon>
    </lineage>
</organism>
<protein>
    <recommendedName>
        <fullName evidence="1">Large ribosomal subunit protein bL12</fullName>
    </recommendedName>
    <alternativeName>
        <fullName evidence="3">50S ribosomal protein L7/L12</fullName>
    </alternativeName>
</protein>
<keyword id="KW-1185">Reference proteome</keyword>
<keyword id="KW-0687">Ribonucleoprotein</keyword>
<keyword id="KW-0689">Ribosomal protein</keyword>
<evidence type="ECO:0000255" key="1">
    <source>
        <dbReference type="HAMAP-Rule" id="MF_00368"/>
    </source>
</evidence>
<evidence type="ECO:0000256" key="2">
    <source>
        <dbReference type="SAM" id="MobiDB-lite"/>
    </source>
</evidence>
<evidence type="ECO:0000305" key="3"/>
<reference key="1">
    <citation type="journal article" date="2009" name="BMC Microbiol.">
        <title>The genome sequence of Geobacter metallireducens: features of metabolism, physiology and regulation common and dissimilar to Geobacter sulfurreducens.</title>
        <authorList>
            <person name="Aklujkar M."/>
            <person name="Krushkal J."/>
            <person name="DiBartolo G."/>
            <person name="Lapidus A."/>
            <person name="Land M.L."/>
            <person name="Lovley D.R."/>
        </authorList>
    </citation>
    <scope>NUCLEOTIDE SEQUENCE [LARGE SCALE GENOMIC DNA]</scope>
    <source>
        <strain>ATCC 53774 / DSM 7210 / GS-15</strain>
    </source>
</reference>
<feature type="chain" id="PRO_0000243427" description="Large ribosomal subunit protein bL12">
    <location>
        <begin position="1"/>
        <end position="127"/>
    </location>
</feature>
<feature type="region of interest" description="Disordered" evidence="2">
    <location>
        <begin position="101"/>
        <end position="127"/>
    </location>
</feature>
<feature type="compositionally biased region" description="Basic and acidic residues" evidence="2">
    <location>
        <begin position="105"/>
        <end position="117"/>
    </location>
</feature>
<name>RL7_GEOMG</name>
<accession>Q39Y14</accession>